<feature type="initiator methionine" description="Removed" evidence="3">
    <location>
        <position position="1"/>
    </location>
</feature>
<feature type="chain" id="PRO_0000055682" description="Protein kinase C alpha type">
    <location>
        <begin position="2"/>
        <end position="672"/>
    </location>
</feature>
<feature type="domain" description="C2" evidence="5">
    <location>
        <begin position="158"/>
        <end position="275"/>
    </location>
</feature>
<feature type="domain" description="Protein kinase" evidence="6">
    <location>
        <begin position="339"/>
        <end position="597"/>
    </location>
</feature>
<feature type="domain" description="AGC-kinase C-terminal" evidence="8">
    <location>
        <begin position="598"/>
        <end position="668"/>
    </location>
</feature>
<feature type="zinc finger region" description="Phorbol-ester/DAG-type 1" evidence="7">
    <location>
        <begin position="36"/>
        <end position="86"/>
    </location>
</feature>
<feature type="zinc finger region" description="Phorbol-ester/DAG-type 2" evidence="7">
    <location>
        <begin position="101"/>
        <end position="151"/>
    </location>
</feature>
<feature type="active site" description="Proton acceptor" evidence="6 9">
    <location>
        <position position="463"/>
    </location>
</feature>
<feature type="binding site" evidence="10">
    <location>
        <position position="186"/>
    </location>
    <ligand>
        <name>Ca(2+)</name>
        <dbReference type="ChEBI" id="CHEBI:29108"/>
        <label>1</label>
    </ligand>
</feature>
<feature type="binding site" evidence="10 15">
    <location>
        <position position="187"/>
    </location>
    <ligand>
        <name>Ca(2+)</name>
        <dbReference type="ChEBI" id="CHEBI:29108"/>
        <label>1</label>
    </ligand>
</feature>
<feature type="binding site" evidence="10 15">
    <location>
        <position position="187"/>
    </location>
    <ligand>
        <name>Ca(2+)</name>
        <dbReference type="ChEBI" id="CHEBI:29108"/>
        <label>2</label>
    </ligand>
</feature>
<feature type="binding site" evidence="10 15">
    <location>
        <position position="193"/>
    </location>
    <ligand>
        <name>Ca(2+)</name>
        <dbReference type="ChEBI" id="CHEBI:29108"/>
        <label>2</label>
    </ligand>
</feature>
<feature type="binding site" evidence="15">
    <location>
        <position position="195"/>
    </location>
    <ligand>
        <name>a 1,2-diacyl-sn-glycero-3-phospho-(1D-myo-inositol-4,5-bisphosphate)</name>
        <dbReference type="ChEBI" id="CHEBI:58456"/>
    </ligand>
</feature>
<feature type="binding site" evidence="15">
    <location>
        <position position="245"/>
    </location>
    <ligand>
        <name>a 1,2-diacyl-sn-glycero-3-phospho-(1D-myo-inositol-4,5-bisphosphate)</name>
        <dbReference type="ChEBI" id="CHEBI:58456"/>
    </ligand>
</feature>
<feature type="binding site" evidence="10 15">
    <location>
        <position position="246"/>
    </location>
    <ligand>
        <name>Ca(2+)</name>
        <dbReference type="ChEBI" id="CHEBI:29108"/>
        <label>1</label>
    </ligand>
</feature>
<feature type="binding site" evidence="10 15">
    <location>
        <position position="246"/>
    </location>
    <ligand>
        <name>Ca(2+)</name>
        <dbReference type="ChEBI" id="CHEBI:29108"/>
        <label>2</label>
    </ligand>
</feature>
<feature type="binding site" evidence="10 15">
    <location>
        <position position="247"/>
    </location>
    <ligand>
        <name>Ca(2+)</name>
        <dbReference type="ChEBI" id="CHEBI:29108"/>
        <label>2</label>
    </ligand>
</feature>
<feature type="binding site" evidence="10 15">
    <location>
        <position position="248"/>
    </location>
    <ligand>
        <name>Ca(2+)</name>
        <dbReference type="ChEBI" id="CHEBI:29108"/>
        <label>1</label>
    </ligand>
</feature>
<feature type="binding site" evidence="10 15">
    <location>
        <position position="248"/>
    </location>
    <ligand>
        <name>Ca(2+)</name>
        <dbReference type="ChEBI" id="CHEBI:29108"/>
        <label>2</label>
    </ligand>
</feature>
<feature type="binding site" evidence="10 15">
    <location>
        <position position="248"/>
    </location>
    <ligand>
        <name>Ca(2+)</name>
        <dbReference type="ChEBI" id="CHEBI:29108"/>
        <label>3</label>
    </ligand>
</feature>
<feature type="binding site" evidence="10 15">
    <location>
        <position position="252"/>
    </location>
    <ligand>
        <name>Ca(2+)</name>
        <dbReference type="ChEBI" id="CHEBI:29108"/>
        <label>3</label>
    </ligand>
</feature>
<feature type="binding site" evidence="10 15">
    <location>
        <position position="254"/>
    </location>
    <ligand>
        <name>Ca(2+)</name>
        <dbReference type="ChEBI" id="CHEBI:29108"/>
        <label>1</label>
    </ligand>
</feature>
<feature type="binding site" evidence="10 15">
    <location>
        <position position="254"/>
    </location>
    <ligand>
        <name>Ca(2+)</name>
        <dbReference type="ChEBI" id="CHEBI:29108"/>
        <label>3</label>
    </ligand>
</feature>
<feature type="binding site" evidence="6">
    <location>
        <begin position="345"/>
        <end position="353"/>
    </location>
    <ligand>
        <name>ATP</name>
        <dbReference type="ChEBI" id="CHEBI:30616"/>
    </ligand>
</feature>
<feature type="binding site" evidence="6">
    <location>
        <position position="368"/>
    </location>
    <ligand>
        <name>ATP</name>
        <dbReference type="ChEBI" id="CHEBI:30616"/>
    </ligand>
</feature>
<feature type="modified residue" description="N-acetylalanine" evidence="3">
    <location>
        <position position="2"/>
    </location>
</feature>
<feature type="modified residue" description="Phosphoserine" evidence="3">
    <location>
        <position position="10"/>
    </location>
</feature>
<feature type="modified residue" description="Phosphoserine" evidence="19">
    <location>
        <position position="226"/>
    </location>
</feature>
<feature type="modified residue" description="Phosphoserine" evidence="19">
    <location>
        <position position="319"/>
    </location>
</feature>
<feature type="modified residue" description="Phosphothreonine" evidence="1">
    <location>
        <position position="494"/>
    </location>
</feature>
<feature type="modified residue" description="Phosphothreonine" evidence="1">
    <location>
        <position position="495"/>
    </location>
</feature>
<feature type="modified residue" description="Phosphothreonine; by PDPK1" evidence="1">
    <location>
        <position position="497"/>
    </location>
</feature>
<feature type="modified residue" description="Phosphothreonine" evidence="2">
    <location>
        <position position="501"/>
    </location>
</feature>
<feature type="modified residue" description="N6-acetyllysine" evidence="3">
    <location>
        <position position="628"/>
    </location>
</feature>
<feature type="modified residue" description="Phosphothreonine" evidence="4">
    <location>
        <position position="631"/>
    </location>
</feature>
<feature type="modified residue" description="Phosphothreonine" evidence="19">
    <location>
        <position position="638"/>
    </location>
</feature>
<feature type="modified residue" description="Phosphoserine" evidence="3">
    <location>
        <position position="651"/>
    </location>
</feature>
<feature type="modified residue" description="Phosphoserine" evidence="2">
    <location>
        <position position="657"/>
    </location>
</feature>
<feature type="modified residue" description="Phosphotyrosine; by SYK" evidence="4">
    <location>
        <position position="658"/>
    </location>
</feature>
<feature type="mutagenesis site" description="Reduced phosphatidylinositol 4,5-bisphosphate recognition and impaired membrane docking. Loss of phosphatidylinositol 4,5-bisphosphate-binding and strong decrease of membrane docking; when associated with A-209; A-211 and A-245." evidence="15">
    <original>Y</original>
    <variation>S</variation>
    <location>
        <position position="195"/>
    </location>
</feature>
<feature type="mutagenesis site" description="Loss of phosphatidylinositol 4,5-bisphosphate-binding and strong decrease of membrane docking; when associated with S-195; A-211 and A-245." evidence="15">
    <original>K</original>
    <variation>A</variation>
    <location>
        <position position="209"/>
    </location>
</feature>
<feature type="mutagenesis site" description="Loss of phosphatidylinositol 4,5-bisphosphate-binding and strong decrease of membrane docking; when associated with S-195; A-209 and A-245." evidence="15">
    <original>K</original>
    <variation>A</variation>
    <location>
        <position position="211"/>
    </location>
</feature>
<feature type="mutagenesis site" description="Reduced phosphatidylinositol 4,5-bisphosphate recognition and impaired membrane docking. Loss of phosphatidylinositol 4,5-bisphosphate-binding and strong decrease of membrane docking; when associated with S-195; A-209 and A-211." evidence="15">
    <original>W</original>
    <variation>A</variation>
    <location>
        <position position="245"/>
    </location>
</feature>
<feature type="strand" evidence="21">
    <location>
        <begin position="161"/>
        <end position="169"/>
    </location>
</feature>
<feature type="strand" evidence="21">
    <location>
        <begin position="172"/>
        <end position="182"/>
    </location>
</feature>
<feature type="strand" evidence="21">
    <location>
        <begin position="194"/>
        <end position="201"/>
    </location>
</feature>
<feature type="strand" evidence="21">
    <location>
        <begin position="222"/>
        <end position="230"/>
    </location>
</feature>
<feature type="helix" evidence="21">
    <location>
        <begin position="233"/>
        <end position="237"/>
    </location>
</feature>
<feature type="strand" evidence="21">
    <location>
        <begin position="239"/>
        <end position="246"/>
    </location>
</feature>
<feature type="strand" evidence="21">
    <location>
        <begin position="249"/>
        <end position="251"/>
    </location>
</feature>
<feature type="strand" evidence="21">
    <location>
        <begin position="254"/>
        <end position="262"/>
    </location>
</feature>
<feature type="helix" evidence="21">
    <location>
        <begin position="263"/>
        <end position="268"/>
    </location>
</feature>
<feature type="strand" evidence="21">
    <location>
        <begin position="271"/>
        <end position="276"/>
    </location>
</feature>
<feature type="helix" evidence="21">
    <location>
        <begin position="280"/>
        <end position="283"/>
    </location>
</feature>
<feature type="strand" evidence="20">
    <location>
        <begin position="288"/>
        <end position="290"/>
    </location>
</feature>
<comment type="function">
    <text evidence="3 4 11 12 13 14">Calcium-activated, phospholipid- and diacylglycerol (DAG)-dependent serine/threonine-protein kinase that is involved in positive and negative regulation of cell proliferation, apoptosis, differentiation, migration and adhesion, cardiac hypertrophy, angiogenesis, platelet function and inflammation, by directly phosphorylating targets such as RAF1, BCL2, CSPG4, TNNT2/CTNT, or activating signaling cascades involving MAPK1/3 (ERK1/2) and RAP1GAP. Depending on the cell type, is involved in cell proliferation and cell growth arrest by positive and negative regulation of the cell cycle. Can promote cell growth by phosphorylating and activating RAF1, which mediates the activation of the MAPK/ERK signaling cascade, and/or by up-regulating CDKN1A, which facilitates active cyclin-dependent kinase (CDK) complex formation. In cells stimulated by the phorbol ester PMA, can trigger a cell cycle arrest program which is associated with the accumulation of the hyper-phosphorylated growth-suppressive form of RB1 and induction of the CDK inhibitors CDKN1A and CDKN1B. Depending on the cell type, exhibits anti-apoptotic function and protects cells from apoptosis by suppressing the p53/TP53-mediated activation of IGFBP3, or mediates anti-apoptotic action by phosphorylating BCL2. During macrophage differentiation induced by macrophage colony-stimulating factor (CSF1), is translocated to the nucleus and is associated with macrophage development. After wounding, translocates from focal contacts to lamellipodia and participates in the modulation of desmosomal adhesion. Plays a role in cell motility by phosphorylating CSPG4, which induces association of CSPG4 with extensive lamellipodia at the cell periphery and polarization of the cell accompanied by increases in cell motility. During chemokine-induced CD4(+) T cell migration, phosphorylates CDC42-guanine exchange factor DOCK8 resulting in its dissociation from LRCH1 and the activation of GTPase CDC42 (By similarity). Negatively regulates myocardial contractility and positively regulates angiogenesis, platelet aggregation and thrombus formation in arteries. Mediates hypertrophic growth of neonatal cardiomyocytes, in part through a MAPK1/3 (ERK1/2)-dependent signaling pathway, and upon PMA treatment, is required to induce cardiomyocyte hypertrophy up to heart failure and death, by increasing protein synthesis, protein-DNA ratio and cell surface area. Regulates cardiomyocyte function by phosphorylating cardiac troponin T (TNNT2/CTNT), which induces significant reduction in actomyosin ATPase activity, myofilament calcium sensitivity and myocardial contractility. In angiogenesis, is required for full endothelial cell migration, adhesion to vitronectin (VTN), and vascular endothelial growth factor A (VEGFA)-dependent regulation of kinase activation and vascular tube formation. Involved in the stabilization of VEGFA mRNA at post-transcriptional level and mediates VEGFA-induced cell proliferation. In the regulation of calcium-induced platelet aggregation, mediates signals from the CD36/GP4 receptor for granule release, and activates the integrin heterodimer ITGA2B-ITGB3 through the RAP1GAP pathway for adhesion. During response to lipopolysaccharides (LPS), may regulate selective LPS-induced macrophage functions involved in host defense and inflammation. But in some inflammatory responses, may negatively regulate NF-kappa-B-induced genes, through IL1A-dependent induction of NF-kappa-B inhibitor alpha (NFKBIA/IKBA). Upon stimulation with 12-O-tetradecanoylphorbol-13-acetate (TPA), phosphorylates EIF4G1, which modulates EIF4G1 binding to MKNK1 and may be involved in the regulation of EIF4E phosphorylation. Phosphorylates KIT, leading to inhibition of KIT activity. Phosphorylates ATF2 which promotes cooperation between ATF2 and JUN, activating transcription (By similarity). Phosphorylates SOCS2 at 'Ser-52' facilitating its ubiquitination and proteasomal degradation (By similarity). Phosphorylates KLHL3 in response to angiotensin II signaling, decreasing the interaction between KLHL3 and WNK4 (By similarity). Phosphorylates and activates LRRK1, which phosphorylates RAB proteins involved in intracellular trafficking (By similarity).</text>
</comment>
<comment type="catalytic activity">
    <reaction evidence="3">
        <text>L-seryl-[protein] + ATP = O-phospho-L-seryl-[protein] + ADP + H(+)</text>
        <dbReference type="Rhea" id="RHEA:17989"/>
        <dbReference type="Rhea" id="RHEA-COMP:9863"/>
        <dbReference type="Rhea" id="RHEA-COMP:11604"/>
        <dbReference type="ChEBI" id="CHEBI:15378"/>
        <dbReference type="ChEBI" id="CHEBI:29999"/>
        <dbReference type="ChEBI" id="CHEBI:30616"/>
        <dbReference type="ChEBI" id="CHEBI:83421"/>
        <dbReference type="ChEBI" id="CHEBI:456216"/>
        <dbReference type="EC" id="2.7.11.13"/>
    </reaction>
</comment>
<comment type="catalytic activity">
    <reaction evidence="3">
        <text>L-threonyl-[protein] + ATP = O-phospho-L-threonyl-[protein] + ADP + H(+)</text>
        <dbReference type="Rhea" id="RHEA:46608"/>
        <dbReference type="Rhea" id="RHEA-COMP:11060"/>
        <dbReference type="Rhea" id="RHEA-COMP:11605"/>
        <dbReference type="ChEBI" id="CHEBI:15378"/>
        <dbReference type="ChEBI" id="CHEBI:30013"/>
        <dbReference type="ChEBI" id="CHEBI:30616"/>
        <dbReference type="ChEBI" id="CHEBI:61977"/>
        <dbReference type="ChEBI" id="CHEBI:456216"/>
        <dbReference type="EC" id="2.7.11.13"/>
    </reaction>
</comment>
<comment type="cofactor">
    <cofactor evidence="5 10 15">
        <name>Ca(2+)</name>
        <dbReference type="ChEBI" id="CHEBI:29108"/>
    </cofactor>
    <text evidence="10 15">Binds 3 Ca(2+) ions per subunit. The ions are bound to the C2 domain.</text>
</comment>
<comment type="activity regulation">
    <text>Classical (or conventional) PKCs (PRKCA, PRKCB and PRKCG) are activated by calcium and diacylglycerol (DAG) in the presence of phosphatidylserine. Three specific sites; Thr-497 (activation loop of the kinase domain), Thr-638 (turn motif) and Ser-657 (hydrophobic region), need to be phosphorylated for its full activation.</text>
</comment>
<comment type="subunit">
    <text evidence="3 4 16">Interacts with ADAP1/CENTA1, CSPG4 and PRKCABP (By similarity). Binds to CAVIN2 in the presence of phosphatidylserine (PubMed:9566962). Interacts with PICK1 (via PDZ domain) (By similarity). Interacts with TRIM41 (By similarity). Recruited in a circadian manner into a nuclear complex which also includes BMAL1 and RACK1 (By similarity). Interacts with PARD3 (By similarity). Interacts with SOCS2 (By similarity).</text>
</comment>
<comment type="interaction">
    <interactant intactId="EBI-935801">
        <id>P05696</id>
    </interactant>
    <interactant intactId="EBI-1173182">
        <id>P34901</id>
        <label>Sdc4</label>
    </interactant>
    <organismsDiffer>false</organismsDiffer>
    <experiments>3</experiments>
</comment>
<comment type="subcellular location">
    <subcellularLocation>
        <location evidence="13">Cytoplasm</location>
    </subcellularLocation>
    <subcellularLocation>
        <location evidence="13 15">Cell membrane</location>
        <topology evidence="18">Peripheral membrane protein</topology>
    </subcellularLocation>
    <subcellularLocation>
        <location evidence="3">Mitochondrion membrane</location>
        <topology evidence="3">Peripheral membrane protein</topology>
    </subcellularLocation>
    <subcellularLocation>
        <location evidence="13">Nucleus</location>
    </subcellularLocation>
    <text evidence="13">Translocated to the nucleus upon treatment with PMA or IGF1.</text>
</comment>
<comment type="PTM">
    <text evidence="3">In response to growth factors, phosphorylated at Thr-631 and Ser-657 by the mTORC2 complex, promoting autophosphorylation and activation of PRKCA.</text>
</comment>
<comment type="similarity">
    <text evidence="17">Belongs to the protein kinase superfamily. AGC Ser/Thr protein kinase family. PKC subfamily.</text>
</comment>
<organism>
    <name type="scientific">Rattus norvegicus</name>
    <name type="common">Rat</name>
    <dbReference type="NCBI Taxonomy" id="10116"/>
    <lineage>
        <taxon>Eukaryota</taxon>
        <taxon>Metazoa</taxon>
        <taxon>Chordata</taxon>
        <taxon>Craniata</taxon>
        <taxon>Vertebrata</taxon>
        <taxon>Euteleostomi</taxon>
        <taxon>Mammalia</taxon>
        <taxon>Eutheria</taxon>
        <taxon>Euarchontoglires</taxon>
        <taxon>Glires</taxon>
        <taxon>Rodentia</taxon>
        <taxon>Myomorpha</taxon>
        <taxon>Muroidea</taxon>
        <taxon>Muridae</taxon>
        <taxon>Murinae</taxon>
        <taxon>Rattus</taxon>
    </lineage>
</organism>
<name>KPCA_RAT</name>
<dbReference type="EC" id="2.7.11.13" evidence="3"/>
<dbReference type="EMBL" id="X07286">
    <property type="protein sequence ID" value="CAA30266.1"/>
    <property type="molecule type" value="mRNA"/>
</dbReference>
<dbReference type="PIR" id="S02248">
    <property type="entry name" value="KIRTC"/>
</dbReference>
<dbReference type="RefSeq" id="NP_001386228.1">
    <property type="nucleotide sequence ID" value="NM_001399299.2"/>
</dbReference>
<dbReference type="PDB" id="1DSY">
    <property type="method" value="X-ray"/>
    <property type="resolution" value="2.60 A"/>
    <property type="chains" value="A=155-293"/>
</dbReference>
<dbReference type="PDB" id="2NCE">
    <property type="method" value="NMR"/>
    <property type="chains" value="A=155-293"/>
</dbReference>
<dbReference type="PDB" id="3GPE">
    <property type="method" value="X-ray"/>
    <property type="resolution" value="2.00 A"/>
    <property type="chains" value="A=156-292"/>
</dbReference>
<dbReference type="PDB" id="3RDJ">
    <property type="method" value="X-ray"/>
    <property type="resolution" value="1.90 A"/>
    <property type="chains" value="A=156-292"/>
</dbReference>
<dbReference type="PDB" id="3TWY">
    <property type="method" value="X-ray"/>
    <property type="resolution" value="1.50 A"/>
    <property type="chains" value="A=156-292"/>
</dbReference>
<dbReference type="PDB" id="4L1L">
    <property type="method" value="X-ray"/>
    <property type="resolution" value="1.60 A"/>
    <property type="chains" value="A=155-293"/>
</dbReference>
<dbReference type="PDB" id="5W4S">
    <property type="method" value="NMR"/>
    <property type="chains" value="A=155-293"/>
</dbReference>
<dbReference type="PDBsum" id="1DSY"/>
<dbReference type="PDBsum" id="2NCE"/>
<dbReference type="PDBsum" id="3GPE"/>
<dbReference type="PDBsum" id="3RDJ"/>
<dbReference type="PDBsum" id="3TWY"/>
<dbReference type="PDBsum" id="4L1L"/>
<dbReference type="PDBsum" id="5W4S"/>
<dbReference type="BMRB" id="P05696"/>
<dbReference type="SMR" id="P05696"/>
<dbReference type="CORUM" id="P05696"/>
<dbReference type="FunCoup" id="P05696">
    <property type="interactions" value="1415"/>
</dbReference>
<dbReference type="IntAct" id="P05696">
    <property type="interactions" value="9"/>
</dbReference>
<dbReference type="MINT" id="P05696"/>
<dbReference type="STRING" id="10116.ENSRNOP00000004699"/>
<dbReference type="BindingDB" id="P05696"/>
<dbReference type="ChEMBL" id="CHEMBL2855"/>
<dbReference type="DrugCentral" id="P05696"/>
<dbReference type="GlyGen" id="P05696">
    <property type="glycosylation" value="4 sites, 1 O-linked glycan (4 sites)"/>
</dbReference>
<dbReference type="iPTMnet" id="P05696"/>
<dbReference type="PhosphoSitePlus" id="P05696"/>
<dbReference type="SwissPalm" id="P05696"/>
<dbReference type="jPOST" id="P05696"/>
<dbReference type="PaxDb" id="10116-ENSRNOP00000004699"/>
<dbReference type="Ensembl" id="ENSRNOT00000004699.9">
    <property type="protein sequence ID" value="ENSRNOP00000004699.8"/>
    <property type="gene ID" value="ENSRNOG00000003491.9"/>
</dbReference>
<dbReference type="GeneID" id="24680"/>
<dbReference type="AGR" id="RGD:3395"/>
<dbReference type="RGD" id="3395">
    <property type="gene designation" value="Prkca"/>
</dbReference>
<dbReference type="eggNOG" id="KOG0696">
    <property type="taxonomic scope" value="Eukaryota"/>
</dbReference>
<dbReference type="GeneTree" id="ENSGT00940000156104"/>
<dbReference type="InParanoid" id="P05696"/>
<dbReference type="PhylomeDB" id="P05696"/>
<dbReference type="BRENDA" id="2.7.11.13">
    <property type="organism ID" value="5301"/>
</dbReference>
<dbReference type="Reactome" id="R-RNO-111933">
    <property type="pathway name" value="Calmodulin induced events"/>
</dbReference>
<dbReference type="Reactome" id="R-RNO-114516">
    <property type="pathway name" value="Disinhibition of SNARE formation"/>
</dbReference>
<dbReference type="Reactome" id="R-RNO-1250196">
    <property type="pathway name" value="SHC1 events in ERBB2 signaling"/>
</dbReference>
<dbReference type="Reactome" id="R-RNO-1433557">
    <property type="pathway name" value="Signaling by SCF-KIT"/>
</dbReference>
<dbReference type="Reactome" id="R-RNO-1433559">
    <property type="pathway name" value="Regulation of KIT signaling"/>
</dbReference>
<dbReference type="Reactome" id="R-RNO-2179392">
    <property type="pathway name" value="EGFR Transactivation by Gastrin"/>
</dbReference>
<dbReference type="Reactome" id="R-RNO-3000170">
    <property type="pathway name" value="Syndecan interactions"/>
</dbReference>
<dbReference type="Reactome" id="R-RNO-399997">
    <property type="pathway name" value="Acetylcholine regulates insulin secretion"/>
</dbReference>
<dbReference type="Reactome" id="R-RNO-416993">
    <property type="pathway name" value="Trafficking of GluR2-containing AMPA receptors"/>
</dbReference>
<dbReference type="Reactome" id="R-RNO-4419969">
    <property type="pathway name" value="Depolymerization of the Nuclear Lamina"/>
</dbReference>
<dbReference type="Reactome" id="R-RNO-450520">
    <property type="pathway name" value="HuR (ELAVL1) binds and stabilizes mRNA"/>
</dbReference>
<dbReference type="Reactome" id="R-RNO-5099900">
    <property type="pathway name" value="WNT5A-dependent internalization of FZD4"/>
</dbReference>
<dbReference type="Reactome" id="R-RNO-5218921">
    <property type="pathway name" value="VEGFR2 mediated cell proliferation"/>
</dbReference>
<dbReference type="Reactome" id="R-RNO-5668599">
    <property type="pathway name" value="RHO GTPases Activate NADPH Oxidases"/>
</dbReference>
<dbReference type="Reactome" id="R-RNO-76005">
    <property type="pathway name" value="Response to elevated platelet cytosolic Ca2+"/>
</dbReference>
<dbReference type="Reactome" id="R-RNO-8853659">
    <property type="pathway name" value="RET signaling"/>
</dbReference>
<dbReference type="EvolutionaryTrace" id="P05696"/>
<dbReference type="PRO" id="PR:P05696"/>
<dbReference type="Proteomes" id="UP000002494">
    <property type="component" value="Chromosome 10"/>
</dbReference>
<dbReference type="GO" id="GO:0035866">
    <property type="term" value="C:alphav-beta3 integrin-PKCalpha complex"/>
    <property type="evidence" value="ECO:0000266"/>
    <property type="project" value="RGD"/>
</dbReference>
<dbReference type="GO" id="GO:0045177">
    <property type="term" value="C:apical part of cell"/>
    <property type="evidence" value="ECO:0000266"/>
    <property type="project" value="RGD"/>
</dbReference>
<dbReference type="GO" id="GO:0030424">
    <property type="term" value="C:axon"/>
    <property type="evidence" value="ECO:0000266"/>
    <property type="project" value="RGD"/>
</dbReference>
<dbReference type="GO" id="GO:0044305">
    <property type="term" value="C:calyx of Held"/>
    <property type="evidence" value="ECO:0000266"/>
    <property type="project" value="RGD"/>
</dbReference>
<dbReference type="GO" id="GO:0036064">
    <property type="term" value="C:ciliary basal body"/>
    <property type="evidence" value="ECO:0000266"/>
    <property type="project" value="RGD"/>
</dbReference>
<dbReference type="GO" id="GO:0120199">
    <property type="term" value="C:cone photoreceptor outer segment"/>
    <property type="evidence" value="ECO:0000266"/>
    <property type="project" value="RGD"/>
</dbReference>
<dbReference type="GO" id="GO:0005737">
    <property type="term" value="C:cytoplasm"/>
    <property type="evidence" value="ECO:0000250"/>
    <property type="project" value="UniProtKB"/>
</dbReference>
<dbReference type="GO" id="GO:0005829">
    <property type="term" value="C:cytosol"/>
    <property type="evidence" value="ECO:0000314"/>
    <property type="project" value="UniProtKB"/>
</dbReference>
<dbReference type="GO" id="GO:0030425">
    <property type="term" value="C:dendrite"/>
    <property type="evidence" value="ECO:0000266"/>
    <property type="project" value="RGD"/>
</dbReference>
<dbReference type="GO" id="GO:0005783">
    <property type="term" value="C:endoplasmic reticulum"/>
    <property type="evidence" value="ECO:0000266"/>
    <property type="project" value="RGD"/>
</dbReference>
<dbReference type="GO" id="GO:0014704">
    <property type="term" value="C:intercalated disc"/>
    <property type="evidence" value="ECO:0000266"/>
    <property type="project" value="RGD"/>
</dbReference>
<dbReference type="GO" id="GO:0016020">
    <property type="term" value="C:membrane"/>
    <property type="evidence" value="ECO:0000266"/>
    <property type="project" value="RGD"/>
</dbReference>
<dbReference type="GO" id="GO:0031966">
    <property type="term" value="C:mitochondrial membrane"/>
    <property type="evidence" value="ECO:0007669"/>
    <property type="project" value="UniProtKB-SubCell"/>
</dbReference>
<dbReference type="GO" id="GO:0005739">
    <property type="term" value="C:mitochondrion"/>
    <property type="evidence" value="ECO:0000266"/>
    <property type="project" value="RGD"/>
</dbReference>
<dbReference type="GO" id="GO:0043025">
    <property type="term" value="C:neuronal cell body"/>
    <property type="evidence" value="ECO:0000266"/>
    <property type="project" value="RGD"/>
</dbReference>
<dbReference type="GO" id="GO:0005634">
    <property type="term" value="C:nucleus"/>
    <property type="evidence" value="ECO:0000266"/>
    <property type="project" value="RGD"/>
</dbReference>
<dbReference type="GO" id="GO:1990917">
    <property type="term" value="C:ooplasm"/>
    <property type="evidence" value="ECO:0000266"/>
    <property type="project" value="RGD"/>
</dbReference>
<dbReference type="GO" id="GO:0048471">
    <property type="term" value="C:perinuclear region of cytoplasm"/>
    <property type="evidence" value="ECO:0000314"/>
    <property type="project" value="UniProtKB"/>
</dbReference>
<dbReference type="GO" id="GO:0005886">
    <property type="term" value="C:plasma membrane"/>
    <property type="evidence" value="ECO:0000266"/>
    <property type="project" value="RGD"/>
</dbReference>
<dbReference type="GO" id="GO:0099523">
    <property type="term" value="C:presynaptic cytosol"/>
    <property type="evidence" value="ECO:0000266"/>
    <property type="project" value="RGD"/>
</dbReference>
<dbReference type="GO" id="GO:0032991">
    <property type="term" value="C:protein-containing complex"/>
    <property type="evidence" value="ECO:0000314"/>
    <property type="project" value="RGD"/>
</dbReference>
<dbReference type="GO" id="GO:0005524">
    <property type="term" value="F:ATP binding"/>
    <property type="evidence" value="ECO:0007669"/>
    <property type="project" value="UniProtKB-KW"/>
</dbReference>
<dbReference type="GO" id="GO:0004698">
    <property type="term" value="F:calcium,diacylglycerol-dependent serine/threonine kinase activity"/>
    <property type="evidence" value="ECO:0000314"/>
    <property type="project" value="RGD"/>
</dbReference>
<dbReference type="GO" id="GO:0004697">
    <property type="term" value="F:diacylglycerol-dependent serine/threonine kinase activity"/>
    <property type="evidence" value="ECO:0000266"/>
    <property type="project" value="RGD"/>
</dbReference>
<dbReference type="GO" id="GO:0019899">
    <property type="term" value="F:enzyme binding"/>
    <property type="evidence" value="ECO:0000266"/>
    <property type="project" value="RGD"/>
</dbReference>
<dbReference type="GO" id="GO:0035403">
    <property type="term" value="F:histone H3T6 kinase activity"/>
    <property type="evidence" value="ECO:0000266"/>
    <property type="project" value="RGD"/>
</dbReference>
<dbReference type="GO" id="GO:0005178">
    <property type="term" value="F:integrin binding"/>
    <property type="evidence" value="ECO:0000266"/>
    <property type="project" value="RGD"/>
</dbReference>
<dbReference type="GO" id="GO:0008289">
    <property type="term" value="F:lipid binding"/>
    <property type="evidence" value="ECO:0000266"/>
    <property type="project" value="RGD"/>
</dbReference>
<dbReference type="GO" id="GO:0004672">
    <property type="term" value="F:protein kinase activity"/>
    <property type="evidence" value="ECO:0000266"/>
    <property type="project" value="RGD"/>
</dbReference>
<dbReference type="GO" id="GO:0106310">
    <property type="term" value="F:protein serine kinase activity"/>
    <property type="evidence" value="ECO:0007669"/>
    <property type="project" value="RHEA"/>
</dbReference>
<dbReference type="GO" id="GO:0004674">
    <property type="term" value="F:protein serine/threonine kinase activity"/>
    <property type="evidence" value="ECO:0000266"/>
    <property type="project" value="RGD"/>
</dbReference>
<dbReference type="GO" id="GO:0005102">
    <property type="term" value="F:signaling receptor binding"/>
    <property type="evidence" value="ECO:0000353"/>
    <property type="project" value="RGD"/>
</dbReference>
<dbReference type="GO" id="GO:0008270">
    <property type="term" value="F:zinc ion binding"/>
    <property type="evidence" value="ECO:0007669"/>
    <property type="project" value="UniProtKB-KW"/>
</dbReference>
<dbReference type="GO" id="GO:0001525">
    <property type="term" value="P:angiogenesis"/>
    <property type="evidence" value="ECO:0007669"/>
    <property type="project" value="UniProtKB-KW"/>
</dbReference>
<dbReference type="GO" id="GO:0007155">
    <property type="term" value="P:cell adhesion"/>
    <property type="evidence" value="ECO:0007669"/>
    <property type="project" value="UniProtKB-KW"/>
</dbReference>
<dbReference type="GO" id="GO:0008283">
    <property type="term" value="P:cell population proliferation"/>
    <property type="evidence" value="ECO:0000266"/>
    <property type="project" value="RGD"/>
</dbReference>
<dbReference type="GO" id="GO:0071322">
    <property type="term" value="P:cellular response to carbohydrate stimulus"/>
    <property type="evidence" value="ECO:0000266"/>
    <property type="project" value="RGD"/>
</dbReference>
<dbReference type="GO" id="GO:0021955">
    <property type="term" value="P:central nervous system neuron axonogenesis"/>
    <property type="evidence" value="ECO:0000315"/>
    <property type="project" value="RGD"/>
</dbReference>
<dbReference type="GO" id="GO:0002062">
    <property type="term" value="P:chondrocyte differentiation"/>
    <property type="evidence" value="ECO:0000266"/>
    <property type="project" value="RGD"/>
</dbReference>
<dbReference type="GO" id="GO:0002159">
    <property type="term" value="P:desmosome assembly"/>
    <property type="evidence" value="ECO:0000266"/>
    <property type="project" value="RGD"/>
</dbReference>
<dbReference type="GO" id="GO:0045184">
    <property type="term" value="P:establishment of protein localization"/>
    <property type="evidence" value="ECO:0000304"/>
    <property type="project" value="UniProtKB"/>
</dbReference>
<dbReference type="GO" id="GO:0050930">
    <property type="term" value="P:induction of positive chemotaxis"/>
    <property type="evidence" value="ECO:0000266"/>
    <property type="project" value="RGD"/>
</dbReference>
<dbReference type="GO" id="GO:0006874">
    <property type="term" value="P:intracellular calcium ion homeostasis"/>
    <property type="evidence" value="ECO:0000266"/>
    <property type="project" value="RGD"/>
</dbReference>
<dbReference type="GO" id="GO:0035556">
    <property type="term" value="P:intracellular signal transduction"/>
    <property type="evidence" value="ECO:0000314"/>
    <property type="project" value="RGD"/>
</dbReference>
<dbReference type="GO" id="GO:0097193">
    <property type="term" value="P:intrinsic apoptotic signaling pathway"/>
    <property type="evidence" value="ECO:0000266"/>
    <property type="project" value="RGD"/>
</dbReference>
<dbReference type="GO" id="GO:0007611">
    <property type="term" value="P:learning or memory"/>
    <property type="evidence" value="ECO:0000315"/>
    <property type="project" value="RGD"/>
</dbReference>
<dbReference type="GO" id="GO:0046716">
    <property type="term" value="P:muscle cell cellular homeostasis"/>
    <property type="evidence" value="ECO:0000266"/>
    <property type="project" value="RGD"/>
</dbReference>
<dbReference type="GO" id="GO:0008285">
    <property type="term" value="P:negative regulation of cell population proliferation"/>
    <property type="evidence" value="ECO:0000266"/>
    <property type="project" value="RGD"/>
</dbReference>
<dbReference type="GO" id="GO:0046325">
    <property type="term" value="P:negative regulation of D-glucose import"/>
    <property type="evidence" value="ECO:0000266"/>
    <property type="project" value="RGD"/>
</dbReference>
<dbReference type="GO" id="GO:0034351">
    <property type="term" value="P:negative regulation of glial cell apoptotic process"/>
    <property type="evidence" value="ECO:0000250"/>
    <property type="project" value="UniProtKB"/>
</dbReference>
<dbReference type="GO" id="GO:0046627">
    <property type="term" value="P:negative regulation of insulin receptor signaling pathway"/>
    <property type="evidence" value="ECO:0000266"/>
    <property type="project" value="RGD"/>
</dbReference>
<dbReference type="GO" id="GO:0043409">
    <property type="term" value="P:negative regulation of MAPK cascade"/>
    <property type="evidence" value="ECO:0000266"/>
    <property type="project" value="RGD"/>
</dbReference>
<dbReference type="GO" id="GO:0017148">
    <property type="term" value="P:negative regulation of translation"/>
    <property type="evidence" value="ECO:0000315"/>
    <property type="project" value="RGD"/>
</dbReference>
<dbReference type="GO" id="GO:0030593">
    <property type="term" value="P:neutrophil chemotaxis"/>
    <property type="evidence" value="ECO:0000266"/>
    <property type="project" value="RGD"/>
</dbReference>
<dbReference type="GO" id="GO:0018107">
    <property type="term" value="P:peptidyl-threonine phosphorylation"/>
    <property type="evidence" value="ECO:0000315"/>
    <property type="project" value="ARUK-UCL"/>
</dbReference>
<dbReference type="GO" id="GO:0045766">
    <property type="term" value="P:positive regulation of angiogenesis"/>
    <property type="evidence" value="ECO:0000250"/>
    <property type="project" value="UniProtKB"/>
</dbReference>
<dbReference type="GO" id="GO:0110063">
    <property type="term" value="P:positive regulation of angiotensin-activated signaling pathway"/>
    <property type="evidence" value="ECO:0000266"/>
    <property type="project" value="RGD"/>
</dbReference>
<dbReference type="GO" id="GO:0043536">
    <property type="term" value="P:positive regulation of blood vessel endothelial cell migration"/>
    <property type="evidence" value="ECO:0000266"/>
    <property type="project" value="RGD"/>
</dbReference>
<dbReference type="GO" id="GO:0045780">
    <property type="term" value="P:positive regulation of bone resorption"/>
    <property type="evidence" value="ECO:0000266"/>
    <property type="project" value="RGD"/>
</dbReference>
<dbReference type="GO" id="GO:0010613">
    <property type="term" value="P:positive regulation of cardiac muscle hypertrophy"/>
    <property type="evidence" value="ECO:0000314"/>
    <property type="project" value="UniProtKB"/>
</dbReference>
<dbReference type="GO" id="GO:0045785">
    <property type="term" value="P:positive regulation of cell adhesion"/>
    <property type="evidence" value="ECO:0000250"/>
    <property type="project" value="UniProtKB"/>
</dbReference>
<dbReference type="GO" id="GO:0030335">
    <property type="term" value="P:positive regulation of cell migration"/>
    <property type="evidence" value="ECO:0000250"/>
    <property type="project" value="UniProtKB"/>
</dbReference>
<dbReference type="GO" id="GO:2000707">
    <property type="term" value="P:positive regulation of dense core granule biogenesis"/>
    <property type="evidence" value="ECO:0000250"/>
    <property type="project" value="UniProtKB"/>
</dbReference>
<dbReference type="GO" id="GO:0010595">
    <property type="term" value="P:positive regulation of endothelial cell migration"/>
    <property type="evidence" value="ECO:0000250"/>
    <property type="project" value="UniProtKB"/>
</dbReference>
<dbReference type="GO" id="GO:0001938">
    <property type="term" value="P:positive regulation of endothelial cell proliferation"/>
    <property type="evidence" value="ECO:0000250"/>
    <property type="project" value="UniProtKB"/>
</dbReference>
<dbReference type="GO" id="GO:0070374">
    <property type="term" value="P:positive regulation of ERK1 and ERK2 cascade"/>
    <property type="evidence" value="ECO:0000315"/>
    <property type="project" value="UniProtKB"/>
</dbReference>
<dbReference type="GO" id="GO:0045921">
    <property type="term" value="P:positive regulation of exocytosis"/>
    <property type="evidence" value="ECO:0000315"/>
    <property type="project" value="RGD"/>
</dbReference>
<dbReference type="GO" id="GO:0050729">
    <property type="term" value="P:positive regulation of inflammatory response"/>
    <property type="evidence" value="ECO:0000266"/>
    <property type="project" value="RGD"/>
</dbReference>
<dbReference type="GO" id="GO:0031666">
    <property type="term" value="P:positive regulation of lipopolysaccharide-mediated signaling pathway"/>
    <property type="evidence" value="ECO:0000250"/>
    <property type="project" value="UniProtKB"/>
</dbReference>
<dbReference type="GO" id="GO:0045651">
    <property type="term" value="P:positive regulation of macrophage differentiation"/>
    <property type="evidence" value="ECO:0000250"/>
    <property type="project" value="UniProtKB"/>
</dbReference>
<dbReference type="GO" id="GO:0045931">
    <property type="term" value="P:positive regulation of mitotic cell cycle"/>
    <property type="evidence" value="ECO:0000250"/>
    <property type="project" value="UniProtKB"/>
</dbReference>
<dbReference type="GO" id="GO:0048661">
    <property type="term" value="P:positive regulation of smooth muscle cell proliferation"/>
    <property type="evidence" value="ECO:0000315"/>
    <property type="project" value="RGD"/>
</dbReference>
<dbReference type="GO" id="GO:0051965">
    <property type="term" value="P:positive regulation of synapse assembly"/>
    <property type="evidence" value="ECO:0000315"/>
    <property type="project" value="RGD"/>
</dbReference>
<dbReference type="GO" id="GO:0099171">
    <property type="term" value="P:presynaptic modulation of chemical synaptic transmission"/>
    <property type="evidence" value="ECO:0000266"/>
    <property type="project" value="RGD"/>
</dbReference>
<dbReference type="GO" id="GO:0070528">
    <property type="term" value="P:protein kinase C signaling"/>
    <property type="evidence" value="ECO:0000266"/>
    <property type="project" value="RGD"/>
</dbReference>
<dbReference type="GO" id="GO:0006937">
    <property type="term" value="P:regulation of muscle contraction"/>
    <property type="evidence" value="ECO:0000266"/>
    <property type="project" value="RGD"/>
</dbReference>
<dbReference type="GO" id="GO:0090330">
    <property type="term" value="P:regulation of platelet aggregation"/>
    <property type="evidence" value="ECO:0000250"/>
    <property type="project" value="UniProtKB"/>
</dbReference>
<dbReference type="GO" id="GO:2000300">
    <property type="term" value="P:regulation of synaptic vesicle exocytosis"/>
    <property type="evidence" value="ECO:0000266"/>
    <property type="project" value="RGD"/>
</dbReference>
<dbReference type="GO" id="GO:0002026">
    <property type="term" value="P:regulation of the force of heart contraction"/>
    <property type="evidence" value="ECO:0000266"/>
    <property type="project" value="RGD"/>
</dbReference>
<dbReference type="GO" id="GO:0051412">
    <property type="term" value="P:response to corticosterone"/>
    <property type="evidence" value="ECO:0000270"/>
    <property type="project" value="RGD"/>
</dbReference>
<dbReference type="GO" id="GO:0032355">
    <property type="term" value="P:response to estradiol"/>
    <property type="evidence" value="ECO:0000315"/>
    <property type="project" value="RGD"/>
</dbReference>
<dbReference type="GO" id="GO:0045471">
    <property type="term" value="P:response to ethanol"/>
    <property type="evidence" value="ECO:0000315"/>
    <property type="project" value="RGD"/>
</dbReference>
<dbReference type="GO" id="GO:0070555">
    <property type="term" value="P:response to interleukin-1"/>
    <property type="evidence" value="ECO:0000266"/>
    <property type="project" value="RGD"/>
</dbReference>
<dbReference type="GO" id="GO:0009612">
    <property type="term" value="P:response to mechanical stimulus"/>
    <property type="evidence" value="ECO:0000270"/>
    <property type="project" value="RGD"/>
</dbReference>
<dbReference type="GO" id="GO:0043434">
    <property type="term" value="P:response to peptide hormone"/>
    <property type="evidence" value="ECO:0000270"/>
    <property type="project" value="RGD"/>
</dbReference>
<dbReference type="GO" id="GO:1904627">
    <property type="term" value="P:response to phorbol 13-acetate 12-myristate"/>
    <property type="evidence" value="ECO:0000314"/>
    <property type="project" value="RGD"/>
</dbReference>
<dbReference type="GO" id="GO:0000302">
    <property type="term" value="P:response to reactive oxygen species"/>
    <property type="evidence" value="ECO:0000315"/>
    <property type="project" value="RGD"/>
</dbReference>
<dbReference type="GO" id="GO:0009636">
    <property type="term" value="P:response to toxic substance"/>
    <property type="evidence" value="ECO:0000270"/>
    <property type="project" value="RGD"/>
</dbReference>
<dbReference type="GO" id="GO:0048863">
    <property type="term" value="P:stem cell differentiation"/>
    <property type="evidence" value="ECO:0000266"/>
    <property type="project" value="RGD"/>
</dbReference>
<dbReference type="CDD" id="cd20833">
    <property type="entry name" value="C1_cPKC_rpt1"/>
    <property type="match status" value="1"/>
</dbReference>
<dbReference type="CDD" id="cd20836">
    <property type="entry name" value="C1_cPKC_rpt2"/>
    <property type="match status" value="1"/>
</dbReference>
<dbReference type="CDD" id="cd04026">
    <property type="entry name" value="C2_PKC_alpha_gamma"/>
    <property type="match status" value="1"/>
</dbReference>
<dbReference type="CDD" id="cd05615">
    <property type="entry name" value="STKc_cPKC_alpha"/>
    <property type="match status" value="1"/>
</dbReference>
<dbReference type="FunFam" id="2.60.40.150:FF:000012">
    <property type="entry name" value="Kinase C alpha type"/>
    <property type="match status" value="1"/>
</dbReference>
<dbReference type="FunFam" id="1.10.510.10:FF:000023">
    <property type="entry name" value="Protein kinase C"/>
    <property type="match status" value="1"/>
</dbReference>
<dbReference type="FunFam" id="3.30.200.20:FF:000080">
    <property type="entry name" value="Protein kinase C"/>
    <property type="match status" value="1"/>
</dbReference>
<dbReference type="FunFam" id="3.30.200.20:FF:000103">
    <property type="entry name" value="Protein kinase C"/>
    <property type="match status" value="1"/>
</dbReference>
<dbReference type="FunFam" id="3.30.60.20:FF:000006">
    <property type="entry name" value="Protein kinase C"/>
    <property type="match status" value="1"/>
</dbReference>
<dbReference type="FunFam" id="3.30.60.20:FF:000031">
    <property type="entry name" value="Protein kinase C alpha"/>
    <property type="match status" value="1"/>
</dbReference>
<dbReference type="Gene3D" id="3.30.60.20">
    <property type="match status" value="2"/>
</dbReference>
<dbReference type="Gene3D" id="2.60.40.150">
    <property type="entry name" value="C2 domain"/>
    <property type="match status" value="1"/>
</dbReference>
<dbReference type="Gene3D" id="3.30.200.20">
    <property type="entry name" value="Phosphorylase Kinase, domain 1"/>
    <property type="match status" value="2"/>
</dbReference>
<dbReference type="Gene3D" id="1.10.510.10">
    <property type="entry name" value="Transferase(Phosphotransferase) domain 1"/>
    <property type="match status" value="1"/>
</dbReference>
<dbReference type="InterPro" id="IPR000961">
    <property type="entry name" value="AGC-kinase_C"/>
</dbReference>
<dbReference type="InterPro" id="IPR046349">
    <property type="entry name" value="C1-like_sf"/>
</dbReference>
<dbReference type="InterPro" id="IPR000008">
    <property type="entry name" value="C2_dom"/>
</dbReference>
<dbReference type="InterPro" id="IPR035892">
    <property type="entry name" value="C2_domain_sf"/>
</dbReference>
<dbReference type="InterPro" id="IPR034663">
    <property type="entry name" value="cPKC_alpha"/>
</dbReference>
<dbReference type="InterPro" id="IPR020454">
    <property type="entry name" value="DAG/PE-bd"/>
</dbReference>
<dbReference type="InterPro" id="IPR011009">
    <property type="entry name" value="Kinase-like_dom_sf"/>
</dbReference>
<dbReference type="InterPro" id="IPR002219">
    <property type="entry name" value="PE/DAG-bd"/>
</dbReference>
<dbReference type="InterPro" id="IPR017892">
    <property type="entry name" value="Pkinase_C"/>
</dbReference>
<dbReference type="InterPro" id="IPR000719">
    <property type="entry name" value="Prot_kinase_dom"/>
</dbReference>
<dbReference type="InterPro" id="IPR017441">
    <property type="entry name" value="Protein_kinase_ATP_BS"/>
</dbReference>
<dbReference type="InterPro" id="IPR014375">
    <property type="entry name" value="Protein_kinase_C_a/b/g"/>
</dbReference>
<dbReference type="InterPro" id="IPR008271">
    <property type="entry name" value="Ser/Thr_kinase_AS"/>
</dbReference>
<dbReference type="PANTHER" id="PTHR24351">
    <property type="entry name" value="RIBOSOMAL PROTEIN S6 KINASE"/>
    <property type="match status" value="1"/>
</dbReference>
<dbReference type="Pfam" id="PF00130">
    <property type="entry name" value="C1_1"/>
    <property type="match status" value="2"/>
</dbReference>
<dbReference type="Pfam" id="PF00168">
    <property type="entry name" value="C2"/>
    <property type="match status" value="1"/>
</dbReference>
<dbReference type="Pfam" id="PF00069">
    <property type="entry name" value="Pkinase"/>
    <property type="match status" value="1"/>
</dbReference>
<dbReference type="Pfam" id="PF00433">
    <property type="entry name" value="Pkinase_C"/>
    <property type="match status" value="1"/>
</dbReference>
<dbReference type="PIRSF" id="PIRSF000550">
    <property type="entry name" value="PKC_alpha"/>
    <property type="match status" value="1"/>
</dbReference>
<dbReference type="PRINTS" id="PR00360">
    <property type="entry name" value="C2DOMAIN"/>
</dbReference>
<dbReference type="PRINTS" id="PR00008">
    <property type="entry name" value="DAGPEDOMAIN"/>
</dbReference>
<dbReference type="SMART" id="SM00109">
    <property type="entry name" value="C1"/>
    <property type="match status" value="2"/>
</dbReference>
<dbReference type="SMART" id="SM00239">
    <property type="entry name" value="C2"/>
    <property type="match status" value="1"/>
</dbReference>
<dbReference type="SMART" id="SM00133">
    <property type="entry name" value="S_TK_X"/>
    <property type="match status" value="1"/>
</dbReference>
<dbReference type="SMART" id="SM00220">
    <property type="entry name" value="S_TKc"/>
    <property type="match status" value="1"/>
</dbReference>
<dbReference type="SUPFAM" id="SSF49562">
    <property type="entry name" value="C2 domain (Calcium/lipid-binding domain, CaLB)"/>
    <property type="match status" value="1"/>
</dbReference>
<dbReference type="SUPFAM" id="SSF57889">
    <property type="entry name" value="Cysteine-rich domain"/>
    <property type="match status" value="2"/>
</dbReference>
<dbReference type="SUPFAM" id="SSF56112">
    <property type="entry name" value="Protein kinase-like (PK-like)"/>
    <property type="match status" value="1"/>
</dbReference>
<dbReference type="PROSITE" id="PS51285">
    <property type="entry name" value="AGC_KINASE_CTER"/>
    <property type="match status" value="1"/>
</dbReference>
<dbReference type="PROSITE" id="PS50004">
    <property type="entry name" value="C2"/>
    <property type="match status" value="1"/>
</dbReference>
<dbReference type="PROSITE" id="PS00107">
    <property type="entry name" value="PROTEIN_KINASE_ATP"/>
    <property type="match status" value="1"/>
</dbReference>
<dbReference type="PROSITE" id="PS50011">
    <property type="entry name" value="PROTEIN_KINASE_DOM"/>
    <property type="match status" value="1"/>
</dbReference>
<dbReference type="PROSITE" id="PS00108">
    <property type="entry name" value="PROTEIN_KINASE_ST"/>
    <property type="match status" value="1"/>
</dbReference>
<dbReference type="PROSITE" id="PS00479">
    <property type="entry name" value="ZF_DAG_PE_1"/>
    <property type="match status" value="2"/>
</dbReference>
<dbReference type="PROSITE" id="PS50081">
    <property type="entry name" value="ZF_DAG_PE_2"/>
    <property type="match status" value="2"/>
</dbReference>
<protein>
    <recommendedName>
        <fullName>Protein kinase C alpha type</fullName>
        <shortName>PKC-A</shortName>
        <shortName>PKC-alpha</shortName>
        <ecNumber evidence="3">2.7.11.13</ecNumber>
    </recommendedName>
</protein>
<evidence type="ECO:0000250" key="1">
    <source>
        <dbReference type="UniProtKB" id="P04409"/>
    </source>
</evidence>
<evidence type="ECO:0000250" key="2">
    <source>
        <dbReference type="UniProtKB" id="P05771"/>
    </source>
</evidence>
<evidence type="ECO:0000250" key="3">
    <source>
        <dbReference type="UniProtKB" id="P17252"/>
    </source>
</evidence>
<evidence type="ECO:0000250" key="4">
    <source>
        <dbReference type="UniProtKB" id="P20444"/>
    </source>
</evidence>
<evidence type="ECO:0000255" key="5">
    <source>
        <dbReference type="PROSITE-ProRule" id="PRU00041"/>
    </source>
</evidence>
<evidence type="ECO:0000255" key="6">
    <source>
        <dbReference type="PROSITE-ProRule" id="PRU00159"/>
    </source>
</evidence>
<evidence type="ECO:0000255" key="7">
    <source>
        <dbReference type="PROSITE-ProRule" id="PRU00226"/>
    </source>
</evidence>
<evidence type="ECO:0000255" key="8">
    <source>
        <dbReference type="PROSITE-ProRule" id="PRU00618"/>
    </source>
</evidence>
<evidence type="ECO:0000255" key="9">
    <source>
        <dbReference type="PROSITE-ProRule" id="PRU10027"/>
    </source>
</evidence>
<evidence type="ECO:0000269" key="10">
    <source>
    </source>
</evidence>
<evidence type="ECO:0000269" key="11">
    <source>
    </source>
</evidence>
<evidence type="ECO:0000269" key="12">
    <source>
    </source>
</evidence>
<evidence type="ECO:0000269" key="13">
    <source>
    </source>
</evidence>
<evidence type="ECO:0000269" key="14">
    <source>
    </source>
</evidence>
<evidence type="ECO:0000269" key="15">
    <source>
    </source>
</evidence>
<evidence type="ECO:0000269" key="16">
    <source>
    </source>
</evidence>
<evidence type="ECO:0000305" key="17"/>
<evidence type="ECO:0000305" key="18">
    <source>
    </source>
</evidence>
<evidence type="ECO:0007744" key="19">
    <source>
    </source>
</evidence>
<evidence type="ECO:0007829" key="20">
    <source>
        <dbReference type="PDB" id="1DSY"/>
    </source>
</evidence>
<evidence type="ECO:0007829" key="21">
    <source>
        <dbReference type="PDB" id="3TWY"/>
    </source>
</evidence>
<sequence length="672" mass="76792">MADVYPANDSTASQDVANRFARKGALRQKNVHEVKDHKFIARFFKQPTFCSHCTDFIWGFGKQGFQCQVCCFVVHKRCHEFVTFSCPGADKGPDTDDPRSKHKFKIHTYGSPTFCDHCGSLLYGLIHQGMKCDTCDMNVHKQCVINVPSLCGMDHTEKRGRIYLKAEVTDEKLHVTVRDAKNLIPMDPNGLSDPYVKLKLIPDPKNESKQKTKTIRSTLNPQWNESFTFKLKPSDKDRRLSVEIWDWDRTTRNDFMGSLSFGVSELMKMPASGWYKLLNQEEGEYYNVPIPEGDEEGNVELRQKFEKAKLGPAGNKVISPSEDRKQPSNNLDRVKLTDFNFLMVLGKGSFGKVMLADRKGTEELYAIKILKKDVVIQDDDVECTMVEKRVLALLDKPPFLTQLHSCFQTVDRLYFVMEYVNGGDLMYHIQQVGKFKEPQAVFYAAEISIGLFFLHKRGIIYRDLKLDNVMLDSEGHIKIADFGMCKEHMMDGVTTRTFCGTPDYIAPEIIAYQPYGKSVDWWAYGVLLYEMLAGQPPFDGEDEDELFQSIMEHNVSYPKSLSKEAVSICKGLMTKHPAKRLGCGPEGERDVREHAFFRRIDWEKLENREIQPPFKPKVCGKGAENFDKFFTRGQPVLTPPDQLVIANIDQSDFEGFSYVNPQFVHPILQSAV</sequence>
<keyword id="KW-0002">3D-structure</keyword>
<keyword id="KW-0007">Acetylation</keyword>
<keyword id="KW-0037">Angiogenesis</keyword>
<keyword id="KW-0053">Apoptosis</keyword>
<keyword id="KW-0067">ATP-binding</keyword>
<keyword id="KW-0106">Calcium</keyword>
<keyword id="KW-0130">Cell adhesion</keyword>
<keyword id="KW-1003">Cell membrane</keyword>
<keyword id="KW-0963">Cytoplasm</keyword>
<keyword id="KW-0418">Kinase</keyword>
<keyword id="KW-0472">Membrane</keyword>
<keyword id="KW-0479">Metal-binding</keyword>
<keyword id="KW-0496">Mitochondrion</keyword>
<keyword id="KW-0547">Nucleotide-binding</keyword>
<keyword id="KW-0539">Nucleus</keyword>
<keyword id="KW-0597">Phosphoprotein</keyword>
<keyword id="KW-1185">Reference proteome</keyword>
<keyword id="KW-0677">Repeat</keyword>
<keyword id="KW-0723">Serine/threonine-protein kinase</keyword>
<keyword id="KW-0808">Transferase</keyword>
<keyword id="KW-0862">Zinc</keyword>
<keyword id="KW-0863">Zinc-finger</keyword>
<gene>
    <name type="primary">Prkca</name>
    <name type="synonym">Pkca</name>
</gene>
<proteinExistence type="evidence at protein level"/>
<reference key="1">
    <citation type="journal article" date="1988" name="Nucleic Acids Res.">
        <title>Nucleotide sequences of cDNAs for alpha and gamma subspecies of rat brain protein kinase C.</title>
        <authorList>
            <person name="Ono Y."/>
            <person name="Fujii T."/>
            <person name="Igarashi K."/>
            <person name="Kikkawa U."/>
            <person name="Ogita K."/>
            <person name="Nishizuka Y."/>
        </authorList>
    </citation>
    <scope>NUCLEOTIDE SEQUENCE [MRNA]</scope>
    <source>
        <tissue>Brain</tissue>
    </source>
</reference>
<reference key="2">
    <citation type="journal article" date="1987" name="FEBS Lett.">
        <title>The common structure and activities of four subspecies of rat brain protein kinase C family.</title>
        <authorList>
            <person name="Kikkawa U."/>
            <person name="Ogita K."/>
            <person name="Ono Y."/>
            <person name="Asaoka Y."/>
            <person name="Shearman M.S."/>
            <person name="Fujii T."/>
            <person name="Ase K."/>
            <person name="Sekiguchi K."/>
            <person name="Igarashi K."/>
            <person name="Nishizuka Y."/>
        </authorList>
    </citation>
    <scope>NUCLEOTIDE SEQUENCE [MRNA]</scope>
    <source>
        <tissue>Brain</tissue>
    </source>
</reference>
<reference key="3">
    <citation type="journal article" date="1998" name="J. Cell Biol.">
        <title>Targeting of protein kinase Calpha to caveolae.</title>
        <authorList>
            <person name="Mineo C."/>
            <person name="Ying Y.-S."/>
            <person name="Chapline C."/>
            <person name="Jaken S."/>
            <person name="Anderson R.G.W."/>
        </authorList>
    </citation>
    <scope>INTERACTION WITH CAVIN2</scope>
</reference>
<reference key="4">
    <citation type="journal article" date="2000" name="J. Cell Biol.">
        <title>Protein kinase C signaling mediates a program of cell cycle withdrawal in the intestinal epithelium.</title>
        <authorList>
            <person name="Frey M.R."/>
            <person name="Clark J.A."/>
            <person name="Leontieva O."/>
            <person name="Uronis J.M."/>
            <person name="Black A.R."/>
            <person name="Black J.D."/>
        </authorList>
    </citation>
    <scope>FUNCTION IN CELL CYCLE ARREST</scope>
</reference>
<reference key="5">
    <citation type="journal article" date="2002" name="J. Cell Biol.">
        <title>PKC alpha regulates the hypertrophic growth of cardiomyocytes through extracellular signal-regulated kinase1/2 (ERK1/2).</title>
        <authorList>
            <person name="Braz J.C."/>
            <person name="Bueno O.F."/>
            <person name="De Windt L.J."/>
            <person name="Molkentin J.D."/>
        </authorList>
    </citation>
    <scope>FUNCTION IN CARDIAC HYPERTROPHY</scope>
</reference>
<reference key="6">
    <citation type="journal article" date="2004" name="Am. J. Physiol.">
        <title>Protein kinase C-alpha-induced hypertrophy of neonatal rat ventricular myocytes.</title>
        <authorList>
            <person name="Vijayan K."/>
            <person name="Szotek E.L."/>
            <person name="Martin J.L."/>
            <person name="Samarel A.M."/>
        </authorList>
    </citation>
    <scope>FUNCTION IN HEART FAILURE</scope>
    <scope>SUBCELLULAR LOCATION</scope>
</reference>
<reference key="7">
    <citation type="journal article" date="1988" name="Nature">
        <title>The molecular heterogeneity of protein kinase C and its implications for cellular regulation.</title>
        <authorList>
            <person name="Nishizuka Y."/>
        </authorList>
    </citation>
    <scope>REVIEW</scope>
</reference>
<reference key="8">
    <citation type="journal article" date="2009" name="J. Biol. Chem.">
        <title>Phosphorylation of activation transcription factor-2 at serine 121 by protein kinase c controls c-Jun-mediated activation of transcription.</title>
        <authorList>
            <person name="Yamasaki T."/>
            <person name="Takahashi A."/>
            <person name="Pan J."/>
            <person name="Yamaguchi N."/>
            <person name="Yokoyama K.K."/>
        </authorList>
    </citation>
    <scope>FUNCTION</scope>
</reference>
<reference key="9">
    <citation type="journal article" date="2012" name="Nat. Commun.">
        <title>Quantitative maps of protein phosphorylation sites across 14 different rat organs and tissues.</title>
        <authorList>
            <person name="Lundby A."/>
            <person name="Secher A."/>
            <person name="Lage K."/>
            <person name="Nordsborg N.B."/>
            <person name="Dmytriyev A."/>
            <person name="Lundby C."/>
            <person name="Olsen J.V."/>
        </authorList>
    </citation>
    <scope>PHOSPHORYLATION [LARGE SCALE ANALYSIS] AT SER-226; SER-319 AND THR-638</scope>
    <scope>IDENTIFICATION BY MASS SPECTROMETRY [LARGE SCALE ANALYSIS]</scope>
</reference>
<reference key="10">
    <citation type="journal article" date="1999" name="EMBO J.">
        <title>Ca(2+) bridges the C2 membrane-binding domain of protein kinase Calpha directly to phosphatidylserine.</title>
        <authorList>
            <person name="Verdaguer N."/>
            <person name="Corbalan-Garcia S."/>
            <person name="Ochoa W.F."/>
            <person name="Fita I."/>
            <person name="Gomez-Fernandez J.C."/>
        </authorList>
    </citation>
    <scope>X-RAY CRYSTALLOGRAPHY (2.6 ANGSTROMS) OF 155-293 IN COMPLEX WITH PHOSPHATIDYLSERINE AND CALCIUM</scope>
</reference>
<reference key="11">
    <citation type="journal article" date="2009" name="Proc. Natl. Acad. Sci. U.S.A.">
        <title>Structural and mechanistic insights into the association of PKCalpha-C2 domain to PtdIns(4,5)P2.</title>
        <authorList>
            <person name="Guerrero-Valero M."/>
            <person name="Ferrer-Orta C."/>
            <person name="Querol-Audi J."/>
            <person name="Marin-Vicente C."/>
            <person name="Fita I."/>
            <person name="Gomez-Fernandez J.C."/>
            <person name="Verdaguer N."/>
            <person name="Corbalan-Garcia S."/>
        </authorList>
    </citation>
    <scope>X-RAY CRYSTALLOGRAPHY (2.0 ANGSTROMS) OF 156-292 IN COMPLEX WITH PHOSPHATIDYLINOSITOL 4,5-BISPHOSPHATE AND CALCIUM</scope>
    <scope>MUTAGENESIS OF TYR-195; LYS-209; LYS-211 AND TRP-245</scope>
    <scope>SUBCELLULAR LOCATION</scope>
</reference>
<accession>P05696</accession>